<name>YVDB_VACCW</name>
<organism>
    <name type="scientific">Vaccinia virus (strain Western Reserve)</name>
    <name type="common">VACV</name>
    <name type="synonym">Vaccinia virus (strain WR)</name>
    <dbReference type="NCBI Taxonomy" id="10254"/>
    <lineage>
        <taxon>Viruses</taxon>
        <taxon>Varidnaviria</taxon>
        <taxon>Bamfordvirae</taxon>
        <taxon>Nucleocytoviricota</taxon>
        <taxon>Pokkesviricetes</taxon>
        <taxon>Chitovirales</taxon>
        <taxon>Poxviridae</taxon>
        <taxon>Chordopoxvirinae</taxon>
        <taxon>Orthopoxvirus</taxon>
        <taxon>Vaccinia virus</taxon>
    </lineage>
</organism>
<protein>
    <recommendedName>
        <fullName>Uncharacterized 8.5 kDa protein</fullName>
    </recommendedName>
</protein>
<dbReference type="EMBL" id="M15058">
    <property type="protein sequence ID" value="AAA48256.1"/>
    <property type="molecule type" value="Genomic_DNA"/>
</dbReference>
<dbReference type="PIR" id="A03875">
    <property type="entry name" value="QQVZ4"/>
</dbReference>
<sequence>MGSDLPVLNALNNSNRAIFVPIGPSNCGYSVLLIDILILLSGNRGSTSFKNKSLITSGLFINKNLAILYILLLSNLAIVL</sequence>
<feature type="chain" id="PRO_0000099687" description="Uncharacterized 8.5 kDa protein">
    <location>
        <begin position="1"/>
        <end position="80"/>
    </location>
</feature>
<accession>P04301</accession>
<proteinExistence type="predicted"/>
<gene>
    <name type="ORF">D ORF B</name>
</gene>
<reference key="1">
    <citation type="journal article" date="1986" name="Virology">
        <title>Nucleotide sequence and genetic map of the 16-kb vaccinia virus HindIII D fragment.</title>
        <authorList>
            <person name="Niles E.G."/>
            <person name="Condit R.C."/>
            <person name="Caro P."/>
            <person name="Davidson K."/>
            <person name="Matusick L."/>
            <person name="Seto J."/>
        </authorList>
    </citation>
    <scope>NUCLEOTIDE SEQUENCE [GENOMIC DNA]</scope>
</reference>
<organismHost>
    <name type="scientific">Bos taurus</name>
    <name type="common">Bovine</name>
    <dbReference type="NCBI Taxonomy" id="9913"/>
</organismHost>